<reference key="1">
    <citation type="journal article" date="1994" name="Nucleic Acids Res.">
        <title>Isolation and characterization of two replication-dependent mouse H1 histone genes.</title>
        <authorList>
            <person name="Dong Y."/>
            <person name="Sirotkin A.M."/>
            <person name="Yang Y.-S."/>
            <person name="Brown D.T."/>
            <person name="Sittman D.B."/>
            <person name="Skoultchi A.I."/>
        </authorList>
    </citation>
    <scope>NUCLEOTIDE SEQUENCE [GENOMIC DNA]</scope>
    <source>
        <strain>BALB/cJ</strain>
        <tissue>Spleen</tissue>
    </source>
</reference>
<reference key="2">
    <citation type="journal article" date="1993" name="J. Biol. Chem.">
        <title>Identification through overexpression and tagging of the variant type of the mouse H1e and H1c genes.</title>
        <authorList>
            <person name="Brown D.T."/>
            <person name="Sittman D.B."/>
        </authorList>
    </citation>
    <scope>NUCLEOTIDE SEQUENCE [GENOMIC DNA]</scope>
</reference>
<reference key="3">
    <citation type="journal article" date="1998" name="Biochim. Biophys. Acta">
        <title>Expression of murine H1 histone genes during postnatal development.</title>
        <authorList>
            <person name="Franke K."/>
            <person name="Drabent B."/>
            <person name="Doenecke D."/>
        </authorList>
    </citation>
    <scope>NUCLEOTIDE SEQUENCE [GENOMIC DNA]</scope>
    <source>
        <strain>BALB/cJ</strain>
    </source>
</reference>
<reference key="4">
    <citation type="journal article" date="2004" name="Genome Res.">
        <title>The status, quality, and expansion of the NIH full-length cDNA project: the Mammalian Gene Collection (MGC).</title>
        <authorList>
            <consortium name="The MGC Project Team"/>
        </authorList>
    </citation>
    <scope>NUCLEOTIDE SEQUENCE [LARGE SCALE MRNA]</scope>
    <source>
        <tissue>Liver</tissue>
    </source>
</reference>
<reference key="5">
    <citation type="journal article" date="2003" name="Mol. Cell. Biol.">
        <title>H1 linker histones are essential for mouse development and affect nucleosome spacing in vivo.</title>
        <authorList>
            <person name="Fan Y."/>
            <person name="Nikitina T."/>
            <person name="Morin-Kensicki E.M."/>
            <person name="Zhao J."/>
            <person name="Magnuson T.R."/>
            <person name="Woodcock C.L."/>
            <person name="Skoultchi A.I."/>
        </authorList>
    </citation>
    <scope>DISRUPTION PHENOTYPE</scope>
    <scope>FUNCTION</scope>
</reference>
<reference key="6">
    <citation type="journal article" date="2005" name="Cell">
        <title>Histone H1 depletion in mammals alters global chromatin structure but causes specific changes in gene regulation.</title>
        <authorList>
            <person name="Fan Y."/>
            <person name="Nikitina T."/>
            <person name="Zhao J."/>
            <person name="Fleury T.J."/>
            <person name="Bhattacharyya R."/>
            <person name="Bouhassira E.E."/>
            <person name="Stein A."/>
            <person name="Woodcock C.L."/>
            <person name="Skoultchi A.I."/>
        </authorList>
    </citation>
    <scope>DISRUPTION PHENOTYPE</scope>
    <scope>FUNCTION IN GENE REGULATION</scope>
</reference>
<reference key="7">
    <citation type="journal article" date="2006" name="Mol. Cell. Proteomics">
        <title>Comprehensive identification of phosphorylation sites in postsynaptic density preparations.</title>
        <authorList>
            <person name="Trinidad J.C."/>
            <person name="Specht C.G."/>
            <person name="Thalhammer A."/>
            <person name="Schoepfer R."/>
            <person name="Burlingame A.L."/>
        </authorList>
    </citation>
    <scope>IDENTIFICATION BY MASS SPECTROMETRY [LARGE SCALE ANALYSIS]</scope>
    <source>
        <tissue>Brain</tissue>
    </source>
</reference>
<reference key="8">
    <citation type="journal article" date="2007" name="Proc. Natl. Acad. Sci. U.S.A.">
        <title>Large-scale phosphorylation analysis of mouse liver.</title>
        <authorList>
            <person name="Villen J."/>
            <person name="Beausoleil S.A."/>
            <person name="Gerber S.A."/>
            <person name="Gygi S.P."/>
        </authorList>
    </citation>
    <scope>ACETYLATION [LARGE SCALE ANALYSIS] AT SER-2</scope>
    <scope>PHOSPHORYLATION [LARGE SCALE ANALYSIS] AT THR-18</scope>
    <scope>CLEAVAGE OF INITIATOR METHIONINE [LARGE SCALE ANALYSIS]</scope>
    <scope>IDENTIFICATION BY MASS SPECTROMETRY [LARGE SCALE ANALYSIS]</scope>
    <source>
        <tissue>Liver</tissue>
    </source>
</reference>
<reference key="9">
    <citation type="journal article" date="2010" name="Cell">
        <title>A tissue-specific atlas of mouse protein phosphorylation and expression.</title>
        <authorList>
            <person name="Huttlin E.L."/>
            <person name="Jedrychowski M.P."/>
            <person name="Elias J.E."/>
            <person name="Goswami T."/>
            <person name="Rad R."/>
            <person name="Beausoleil S.A."/>
            <person name="Villen J."/>
            <person name="Haas W."/>
            <person name="Sowa M.E."/>
            <person name="Gygi S.P."/>
        </authorList>
    </citation>
    <scope>PHOSPHORYLATION [LARGE SCALE ANALYSIS] AT SER-36</scope>
    <scope>IDENTIFICATION BY MASS SPECTROMETRY [LARGE SCALE ANALYSIS]</scope>
    <source>
        <tissue>Brain</tissue>
        <tissue>Brown adipose tissue</tissue>
        <tissue>Heart</tissue>
        <tissue>Kidney</tissue>
        <tissue>Lung</tissue>
        <tissue>Pancreas</tissue>
        <tissue>Spleen</tissue>
    </source>
</reference>
<reference key="10">
    <citation type="journal article" date="2013" name="Mol. Cell">
        <title>SIRT5-mediated lysine desuccinylation impacts diverse metabolic pathways.</title>
        <authorList>
            <person name="Park J."/>
            <person name="Chen Y."/>
            <person name="Tishkoff D.X."/>
            <person name="Peng C."/>
            <person name="Tan M."/>
            <person name="Dai L."/>
            <person name="Xie Z."/>
            <person name="Zhang Y."/>
            <person name="Zwaans B.M."/>
            <person name="Skinner M.E."/>
            <person name="Lombard D.B."/>
            <person name="Zhao Y."/>
        </authorList>
    </citation>
    <scope>ACETYLATION [LARGE SCALE ANALYSIS] AT SER-2 AND LYS-17</scope>
    <scope>SUCCINYLATION [LARGE SCALE ANALYSIS] AT LYS-34</scope>
    <scope>CLEAVAGE OF INITIATOR METHIONINE [LARGE SCALE ANALYSIS]</scope>
    <scope>IDENTIFICATION BY MASS SPECTROMETRY [LARGE SCALE ANALYSIS]</scope>
    <source>
        <tissue>Embryonic fibroblast</tissue>
    </source>
</reference>
<reference key="11">
    <citation type="journal article" date="2014" name="Nature">
        <title>Citrullination regulates pluripotency and histone H1 binding to chromatin.</title>
        <authorList>
            <person name="Christophorou M.A."/>
            <person name="Castelo-Branco G."/>
            <person name="Halley-Stott R.P."/>
            <person name="Oliveira C.S."/>
            <person name="Loos R."/>
            <person name="Radzisheuskaya A."/>
            <person name="Mowen K.A."/>
            <person name="Bertone P."/>
            <person name="Silva J.C."/>
            <person name="Zernicka-Goetz M."/>
            <person name="Nielsen M.L."/>
            <person name="Gurdon J.B."/>
            <person name="Kouzarides T."/>
        </authorList>
    </citation>
    <scope>CITRULLINATION AT ARG-54</scope>
</reference>
<gene>
    <name evidence="2" type="primary">H1-4</name>
    <name evidence="11" type="synonym">H1f4</name>
    <name evidence="11" type="synonym">Hist1h1e</name>
</gene>
<comment type="function">
    <text evidence="8 9">Histone H1 protein binds to linker DNA between nucleosomes forming the macromolecular structure known as the chromatin fiber. Histones H1 are necessary for the condensation of nucleosome chains into higher-order structured fibers. Also acts as a regulator of individual gene transcription through chromatin remodeling, nucleosome spacing and DNA methylation.</text>
</comment>
<comment type="subcellular location">
    <subcellularLocation>
        <location>Nucleus</location>
    </subcellularLocation>
    <subcellularLocation>
        <location>Chromosome</location>
    </subcellularLocation>
    <text evidence="1">Mainly localizes in heterochromatin. Dysplays a punctuate staining pattern in the nucleus.</text>
</comment>
<comment type="domain">
    <text evidence="1">The C-terminal domain is required for high-affinity binding to chromatin.</text>
</comment>
<comment type="PTM">
    <text evidence="10">Citrullination at Arg-54 (H1R54ci) by PADI4 takes place within the DNA-binding site of H1 and results in its displacement from chromatin and global chromatin decondensation, thereby promoting pluripotency and stem cell maintenance.</text>
</comment>
<comment type="PTM">
    <text evidence="2">ADP-ribosylated on Ser-55, Ser-113 and Ser-150 in response to DNA damage.</text>
</comment>
<comment type="PTM">
    <text evidence="4">H1 histones are progressively phosphorylated during the cell cycle, becoming maximally phosphorylated during late G2 phase and M phase, and being dephosphorylated sharply thereafter.</text>
</comment>
<comment type="PTM">
    <text evidence="2">Acetylated at Lys-26. Deacetylated at Lys-26 by SIRT1.</text>
</comment>
<comment type="PTM">
    <text evidence="5">Hydroxybutyrylation of histones is induced by starvation.</text>
</comment>
<comment type="disruption phenotype">
    <text evidence="8 9">Triple-deficient mice (H1-2, H1-3 and H1-4) die by midgestation with a broad range of defects. These embryos have about 50% of the normal ratio of H1 to nucleosomes. This proves at least that a correct stoichiometry of linker histone deposition on chromatin is essential.</text>
</comment>
<comment type="similarity">
    <text evidence="6">Belongs to the histone H1/H5 family.</text>
</comment>
<keyword id="KW-0007">Acetylation</keyword>
<keyword id="KW-0013">ADP-ribosylation</keyword>
<keyword id="KW-0158">Chromosome</keyword>
<keyword id="KW-0164">Citrullination</keyword>
<keyword id="KW-0238">DNA-binding</keyword>
<keyword id="KW-0379">Hydroxylation</keyword>
<keyword id="KW-0488">Methylation</keyword>
<keyword id="KW-0539">Nucleus</keyword>
<keyword id="KW-0597">Phosphoprotein</keyword>
<keyword id="KW-1185">Reference proteome</keyword>
<evidence type="ECO:0000250" key="1"/>
<evidence type="ECO:0000250" key="2">
    <source>
        <dbReference type="UniProtKB" id="P10412"/>
    </source>
</evidence>
<evidence type="ECO:0000250" key="3">
    <source>
        <dbReference type="UniProtKB" id="P15865"/>
    </source>
</evidence>
<evidence type="ECO:0000250" key="4">
    <source>
        <dbReference type="UniProtKB" id="P43275"/>
    </source>
</evidence>
<evidence type="ECO:0000250" key="5">
    <source>
        <dbReference type="UniProtKB" id="P43277"/>
    </source>
</evidence>
<evidence type="ECO:0000255" key="6">
    <source>
        <dbReference type="PROSITE-ProRule" id="PRU00837"/>
    </source>
</evidence>
<evidence type="ECO:0000256" key="7">
    <source>
        <dbReference type="SAM" id="MobiDB-lite"/>
    </source>
</evidence>
<evidence type="ECO:0000269" key="8">
    <source>
    </source>
</evidence>
<evidence type="ECO:0000269" key="9">
    <source>
    </source>
</evidence>
<evidence type="ECO:0000269" key="10">
    <source>
    </source>
</evidence>
<evidence type="ECO:0000312" key="11">
    <source>
        <dbReference type="MGI" id="MGI:1931527"/>
    </source>
</evidence>
<evidence type="ECO:0007744" key="12">
    <source>
    </source>
</evidence>
<evidence type="ECO:0007744" key="13">
    <source>
    </source>
</evidence>
<evidence type="ECO:0007744" key="14">
    <source>
    </source>
</evidence>
<feature type="initiator methionine" description="Removed" evidence="12 14">
    <location>
        <position position="1"/>
    </location>
</feature>
<feature type="chain" id="PRO_0000195917" description="Histone H1.4">
    <location>
        <begin position="2"/>
        <end position="219"/>
    </location>
</feature>
<feature type="domain" description="H15" evidence="6">
    <location>
        <begin position="36"/>
        <end position="109"/>
    </location>
</feature>
<feature type="region of interest" description="Disordered" evidence="7">
    <location>
        <begin position="1"/>
        <end position="41"/>
    </location>
</feature>
<feature type="region of interest" description="Disordered" evidence="7">
    <location>
        <begin position="92"/>
        <end position="219"/>
    </location>
</feature>
<feature type="compositionally biased region" description="Low complexity" evidence="7">
    <location>
        <begin position="1"/>
        <end position="15"/>
    </location>
</feature>
<feature type="compositionally biased region" description="Basic residues" evidence="7">
    <location>
        <begin position="20"/>
        <end position="35"/>
    </location>
</feature>
<feature type="compositionally biased region" description="Basic residues" evidence="7">
    <location>
        <begin position="119"/>
        <end position="140"/>
    </location>
</feature>
<feature type="compositionally biased region" description="Basic residues" evidence="7">
    <location>
        <begin position="149"/>
        <end position="160"/>
    </location>
</feature>
<feature type="compositionally biased region" description="Basic residues" evidence="7">
    <location>
        <begin position="168"/>
        <end position="185"/>
    </location>
</feature>
<feature type="compositionally biased region" description="Basic residues" evidence="7">
    <location>
        <begin position="192"/>
        <end position="219"/>
    </location>
</feature>
<feature type="modified residue" description="N-acetylserine" evidence="12 14">
    <location>
        <position position="2"/>
    </location>
</feature>
<feature type="modified residue" description="Phosphoserine" evidence="3">
    <location>
        <position position="2"/>
    </location>
</feature>
<feature type="modified residue" description="N6-acetyllysine" evidence="14">
    <location>
        <position position="17"/>
    </location>
</feature>
<feature type="modified residue" description="Phosphothreonine" evidence="12">
    <location>
        <position position="18"/>
    </location>
</feature>
<feature type="modified residue" description="N6-acetyllysine; alternate" evidence="2">
    <location>
        <position position="26"/>
    </location>
</feature>
<feature type="modified residue" description="N6-methyllysine; alternate" evidence="2">
    <location>
        <position position="26"/>
    </location>
</feature>
<feature type="modified residue" description="N6-(beta-hydroxybutyryl)lysine; alternate" evidence="5">
    <location>
        <position position="34"/>
    </location>
</feature>
<feature type="modified residue" description="N6-succinyllysine; alternate" evidence="14">
    <location>
        <position position="34"/>
    </location>
</feature>
<feature type="modified residue" description="Phosphoserine" evidence="13">
    <location>
        <position position="36"/>
    </location>
</feature>
<feature type="modified residue" description="N6-(beta-hydroxybutyryl)lysine" evidence="5">
    <location>
        <position position="52"/>
    </location>
</feature>
<feature type="modified residue" description="Citrulline" evidence="10">
    <location>
        <position position="54"/>
    </location>
</feature>
<feature type="modified residue" description="N6-(beta-hydroxybutyryl)lysine" evidence="5">
    <location>
        <position position="64"/>
    </location>
</feature>
<feature type="modified residue" description="N6-(beta-hydroxybutyryl)lysine" evidence="5">
    <location>
        <position position="85"/>
    </location>
</feature>
<feature type="modified residue" description="N6-(beta-hydroxybutyryl)lysine" evidence="5">
    <location>
        <position position="90"/>
    </location>
</feature>
<feature type="modified residue" description="N6-(beta-hydroxybutyryl)lysine" evidence="5">
    <location>
        <position position="106"/>
    </location>
</feature>
<feature type="modified residue" description="Phosphothreonine" evidence="2">
    <location>
        <position position="146"/>
    </location>
</feature>
<feature type="modified residue" description="ADP-ribosylserine" evidence="2">
    <location>
        <position position="150"/>
    </location>
</feature>
<feature type="modified residue" description="Phosphoserine" evidence="2">
    <location>
        <position position="187"/>
    </location>
</feature>
<proteinExistence type="evidence at protein level"/>
<accession>P43274</accession>
<accession>Q5EBH3</accession>
<sequence length="219" mass="21977">MSETAPAAPAAPAPAEKTPVKKKARKAAGGAKRKTSGPPVSELITKAVAASKERSGVSLAALKKALAAAGYDVEKNNSRIKLGLKSLVSKGTLVQTKGTGASGSFKLNKKAASGEAKPKAKRAGAAKAKKPAGAAKKPKKAAGTATAKKSTKKTPKKAKKPAAAAGAKKAKSPKKAKATKAKKAPKSPAKAKTVKPKAAKPKTSKPKAAKPKKTAAKKK</sequence>
<organism>
    <name type="scientific">Mus musculus</name>
    <name type="common">Mouse</name>
    <dbReference type="NCBI Taxonomy" id="10090"/>
    <lineage>
        <taxon>Eukaryota</taxon>
        <taxon>Metazoa</taxon>
        <taxon>Chordata</taxon>
        <taxon>Craniata</taxon>
        <taxon>Vertebrata</taxon>
        <taxon>Euteleostomi</taxon>
        <taxon>Mammalia</taxon>
        <taxon>Eutheria</taxon>
        <taxon>Euarchontoglires</taxon>
        <taxon>Glires</taxon>
        <taxon>Rodentia</taxon>
        <taxon>Myomorpha</taxon>
        <taxon>Muroidea</taxon>
        <taxon>Muridae</taxon>
        <taxon>Murinae</taxon>
        <taxon>Mus</taxon>
        <taxon>Mus</taxon>
    </lineage>
</organism>
<protein>
    <recommendedName>
        <fullName>Histone H1.4</fullName>
    </recommendedName>
    <alternativeName>
        <fullName>H1 VAR.2</fullName>
    </alternativeName>
    <alternativeName>
        <fullName>H1e</fullName>
    </alternativeName>
</protein>
<dbReference type="EMBL" id="L26163">
    <property type="protein sequence ID" value="AAA37760.1"/>
    <property type="molecule type" value="Genomic_DNA"/>
</dbReference>
<dbReference type="EMBL" id="L04141">
    <property type="protein sequence ID" value="AAA37814.1"/>
    <property type="molecule type" value="Genomic_DNA"/>
</dbReference>
<dbReference type="EMBL" id="Y12292">
    <property type="protein sequence ID" value="CAA72971.1"/>
    <property type="molecule type" value="Genomic_DNA"/>
</dbReference>
<dbReference type="EMBL" id="BC089600">
    <property type="protein sequence ID" value="AAH89600.1"/>
    <property type="molecule type" value="mRNA"/>
</dbReference>
<dbReference type="CCDS" id="CCDS26355.1"/>
<dbReference type="PIR" id="I49742">
    <property type="entry name" value="I49742"/>
</dbReference>
<dbReference type="RefSeq" id="NP_056602.1">
    <property type="nucleotide sequence ID" value="NM_015787.4"/>
</dbReference>
<dbReference type="SMR" id="P43274"/>
<dbReference type="BioGRID" id="206062">
    <property type="interactions" value="23"/>
</dbReference>
<dbReference type="FunCoup" id="P43274">
    <property type="interactions" value="306"/>
</dbReference>
<dbReference type="IntAct" id="P43274">
    <property type="interactions" value="11"/>
</dbReference>
<dbReference type="MINT" id="P43274"/>
<dbReference type="STRING" id="10090.ENSMUSP00000057308"/>
<dbReference type="MoonProt" id="P43274"/>
<dbReference type="GlyGen" id="P43274">
    <property type="glycosylation" value="1 site, 1 O-linked glycan (1 site)"/>
</dbReference>
<dbReference type="iPTMnet" id="P43274"/>
<dbReference type="PhosphoSitePlus" id="P43274"/>
<dbReference type="jPOST" id="P43274"/>
<dbReference type="PaxDb" id="10090-ENSMUSP00000057308"/>
<dbReference type="PeptideAtlas" id="P43274"/>
<dbReference type="ProteomicsDB" id="269642"/>
<dbReference type="Pumba" id="P43274"/>
<dbReference type="Antibodypedia" id="25545">
    <property type="antibodies" value="437 antibodies from 22 providers"/>
</dbReference>
<dbReference type="DNASU" id="50709"/>
<dbReference type="Ensembl" id="ENSMUST00000062045.4">
    <property type="protein sequence ID" value="ENSMUSP00000057308.3"/>
    <property type="gene ID" value="ENSMUSG00000051627.4"/>
</dbReference>
<dbReference type="GeneID" id="50709"/>
<dbReference type="KEGG" id="mmu:50709"/>
<dbReference type="UCSC" id="uc007puj.3">
    <property type="organism name" value="mouse"/>
</dbReference>
<dbReference type="AGR" id="MGI:1931527"/>
<dbReference type="CTD" id="50709"/>
<dbReference type="MGI" id="MGI:1931527">
    <property type="gene designation" value="H1f4"/>
</dbReference>
<dbReference type="VEuPathDB" id="HostDB:ENSMUSG00000051627"/>
<dbReference type="eggNOG" id="KOG4012">
    <property type="taxonomic scope" value="Eukaryota"/>
</dbReference>
<dbReference type="GeneTree" id="ENSGT00940000155501"/>
<dbReference type="HOGENOM" id="CLU_052897_7_0_1"/>
<dbReference type="InParanoid" id="P43274"/>
<dbReference type="OMA" id="MISECIA"/>
<dbReference type="OrthoDB" id="9634976at2759"/>
<dbReference type="PhylomeDB" id="P43274"/>
<dbReference type="TreeFam" id="TF313664"/>
<dbReference type="Reactome" id="R-MMU-140342">
    <property type="pathway name" value="Apoptosis induced DNA fragmentation"/>
</dbReference>
<dbReference type="Reactome" id="R-MMU-2559584">
    <property type="pathway name" value="Formation of Senescence-Associated Heterochromatin Foci (SAHF)"/>
</dbReference>
<dbReference type="BioGRID-ORCS" id="50709">
    <property type="hits" value="8 hits in 81 CRISPR screens"/>
</dbReference>
<dbReference type="CD-CODE" id="CE726F99">
    <property type="entry name" value="Postsynaptic density"/>
</dbReference>
<dbReference type="PRO" id="PR:P43274"/>
<dbReference type="Proteomes" id="UP000000589">
    <property type="component" value="Chromosome 13"/>
</dbReference>
<dbReference type="RNAct" id="P43274">
    <property type="molecule type" value="protein"/>
</dbReference>
<dbReference type="Bgee" id="ENSMUSG00000051627">
    <property type="expression patterns" value="Expressed in undifferentiated genital tubercle and 87 other cell types or tissues"/>
</dbReference>
<dbReference type="GO" id="GO:0000792">
    <property type="term" value="C:heterochromatin"/>
    <property type="evidence" value="ECO:0007669"/>
    <property type="project" value="Ensembl"/>
</dbReference>
<dbReference type="GO" id="GO:0000786">
    <property type="term" value="C:nucleosome"/>
    <property type="evidence" value="ECO:0007669"/>
    <property type="project" value="Ensembl"/>
</dbReference>
<dbReference type="GO" id="GO:0005634">
    <property type="term" value="C:nucleus"/>
    <property type="evidence" value="ECO:0000314"/>
    <property type="project" value="UniProtKB"/>
</dbReference>
<dbReference type="GO" id="GO:0043531">
    <property type="term" value="F:ADP binding"/>
    <property type="evidence" value="ECO:0007669"/>
    <property type="project" value="Ensembl"/>
</dbReference>
<dbReference type="GO" id="GO:0016208">
    <property type="term" value="F:AMP binding"/>
    <property type="evidence" value="ECO:0007669"/>
    <property type="project" value="Ensembl"/>
</dbReference>
<dbReference type="GO" id="GO:0005524">
    <property type="term" value="F:ATP binding"/>
    <property type="evidence" value="ECO:0007669"/>
    <property type="project" value="Ensembl"/>
</dbReference>
<dbReference type="GO" id="GO:0005509">
    <property type="term" value="F:calcium ion binding"/>
    <property type="evidence" value="ECO:0007669"/>
    <property type="project" value="Ensembl"/>
</dbReference>
<dbReference type="GO" id="GO:0031490">
    <property type="term" value="F:chromatin DNA binding"/>
    <property type="evidence" value="ECO:0007669"/>
    <property type="project" value="Ensembl"/>
</dbReference>
<dbReference type="GO" id="GO:0032564">
    <property type="term" value="F:dATP binding"/>
    <property type="evidence" value="ECO:0007669"/>
    <property type="project" value="Ensembl"/>
</dbReference>
<dbReference type="GO" id="GO:0003677">
    <property type="term" value="F:DNA binding"/>
    <property type="evidence" value="ECO:0000314"/>
    <property type="project" value="MGI"/>
</dbReference>
<dbReference type="GO" id="GO:0003690">
    <property type="term" value="F:double-stranded DNA binding"/>
    <property type="evidence" value="ECO:0007669"/>
    <property type="project" value="Ensembl"/>
</dbReference>
<dbReference type="GO" id="GO:0005525">
    <property type="term" value="F:GTP binding"/>
    <property type="evidence" value="ECO:0007669"/>
    <property type="project" value="Ensembl"/>
</dbReference>
<dbReference type="GO" id="GO:0042826">
    <property type="term" value="F:histone deacetylase binding"/>
    <property type="evidence" value="ECO:0007669"/>
    <property type="project" value="Ensembl"/>
</dbReference>
<dbReference type="GO" id="GO:0030527">
    <property type="term" value="F:structural constituent of chromatin"/>
    <property type="evidence" value="ECO:0000315"/>
    <property type="project" value="MGI"/>
</dbReference>
<dbReference type="GO" id="GO:0006325">
    <property type="term" value="P:chromatin organization"/>
    <property type="evidence" value="ECO:0000315"/>
    <property type="project" value="MGI"/>
</dbReference>
<dbReference type="GO" id="GO:0000122">
    <property type="term" value="P:negative regulation of transcription by RNA polymerase II"/>
    <property type="evidence" value="ECO:0000316"/>
    <property type="project" value="MGI"/>
</dbReference>
<dbReference type="GO" id="GO:0006334">
    <property type="term" value="P:nucleosome assembly"/>
    <property type="evidence" value="ECO:0007669"/>
    <property type="project" value="InterPro"/>
</dbReference>
<dbReference type="GO" id="GO:0006357">
    <property type="term" value="P:regulation of transcription by RNA polymerase II"/>
    <property type="evidence" value="ECO:0000315"/>
    <property type="project" value="MGI"/>
</dbReference>
<dbReference type="CDD" id="cd00073">
    <property type="entry name" value="H15"/>
    <property type="match status" value="1"/>
</dbReference>
<dbReference type="FunFam" id="1.10.10.10:FF:000075">
    <property type="entry name" value="Histone H1 like"/>
    <property type="match status" value="1"/>
</dbReference>
<dbReference type="Gene3D" id="1.10.10.10">
    <property type="entry name" value="Winged helix-like DNA-binding domain superfamily/Winged helix DNA-binding domain"/>
    <property type="match status" value="1"/>
</dbReference>
<dbReference type="IDEAL" id="IID50317"/>
<dbReference type="InterPro" id="IPR005819">
    <property type="entry name" value="H1/H5"/>
</dbReference>
<dbReference type="InterPro" id="IPR005818">
    <property type="entry name" value="Histone_H1/H5_H15"/>
</dbReference>
<dbReference type="InterPro" id="IPR036388">
    <property type="entry name" value="WH-like_DNA-bd_sf"/>
</dbReference>
<dbReference type="InterPro" id="IPR036390">
    <property type="entry name" value="WH_DNA-bd_sf"/>
</dbReference>
<dbReference type="Pfam" id="PF00538">
    <property type="entry name" value="Linker_histone"/>
    <property type="match status" value="1"/>
</dbReference>
<dbReference type="PRINTS" id="PR00624">
    <property type="entry name" value="HISTONEH5"/>
</dbReference>
<dbReference type="SMART" id="SM00526">
    <property type="entry name" value="H15"/>
    <property type="match status" value="1"/>
</dbReference>
<dbReference type="SUPFAM" id="SSF46785">
    <property type="entry name" value="Winged helix' DNA-binding domain"/>
    <property type="match status" value="1"/>
</dbReference>
<dbReference type="PROSITE" id="PS51504">
    <property type="entry name" value="H15"/>
    <property type="match status" value="1"/>
</dbReference>
<name>H14_MOUSE</name>